<protein>
    <recommendedName>
        <fullName evidence="3">Large ribosomal subunit protein uL3c</fullName>
    </recommendedName>
    <alternativeName>
        <fullName>50S ribosomal protein L3, chloroplastic</fullName>
    </alternativeName>
</protein>
<geneLocation type="chloroplast"/>
<feature type="chain" id="PRO_0000276573" description="Large ribosomal subunit protein uL3c">
    <location>
        <begin position="1"/>
        <end position="207"/>
    </location>
</feature>
<feature type="region of interest" description="Disordered" evidence="2">
    <location>
        <begin position="129"/>
        <end position="148"/>
    </location>
</feature>
<accession>A0T0H8</accession>
<sequence>MVVGLLGNKIGMTQIFDESGNIIPVTILKVGPCVITQVKNQSKDGYDSIQIGYGNVLSKALTQPELGHLQKSNIQPLKYLKEFRINQETEFQIGQVLNVDSFTPGQLVNIQGKSIGKGFSGLQKRHNFTRGPMTHGSKNHRAPGSIGMGTTPGRVLPGKKMSGQLGNKITTIKKLKIIQINSEENILVIKGSVPGKPGNLLSIVPSA</sequence>
<dbReference type="EMBL" id="EF067920">
    <property type="protein sequence ID" value="ABK20676.1"/>
    <property type="molecule type" value="Genomic_DNA"/>
</dbReference>
<dbReference type="RefSeq" id="YP_874453.1">
    <property type="nucleotide sequence ID" value="NC_008588.1"/>
</dbReference>
<dbReference type="SMR" id="A0T0H8"/>
<dbReference type="FunCoup" id="A0T0H8">
    <property type="interactions" value="73"/>
</dbReference>
<dbReference type="STRING" id="556484.A0T0H8"/>
<dbReference type="GeneID" id="4524556"/>
<dbReference type="InParanoid" id="A0T0H8"/>
<dbReference type="Proteomes" id="UP000000759">
    <property type="component" value="Chloroplast"/>
</dbReference>
<dbReference type="GO" id="GO:0009507">
    <property type="term" value="C:chloroplast"/>
    <property type="evidence" value="ECO:0007669"/>
    <property type="project" value="UniProtKB-SubCell"/>
</dbReference>
<dbReference type="GO" id="GO:0022625">
    <property type="term" value="C:cytosolic large ribosomal subunit"/>
    <property type="evidence" value="ECO:0007669"/>
    <property type="project" value="TreeGrafter"/>
</dbReference>
<dbReference type="GO" id="GO:0019843">
    <property type="term" value="F:rRNA binding"/>
    <property type="evidence" value="ECO:0007669"/>
    <property type="project" value="UniProtKB-UniRule"/>
</dbReference>
<dbReference type="GO" id="GO:0003735">
    <property type="term" value="F:structural constituent of ribosome"/>
    <property type="evidence" value="ECO:0007669"/>
    <property type="project" value="InterPro"/>
</dbReference>
<dbReference type="GO" id="GO:0006412">
    <property type="term" value="P:translation"/>
    <property type="evidence" value="ECO:0007669"/>
    <property type="project" value="UniProtKB-UniRule"/>
</dbReference>
<dbReference type="FunFam" id="3.30.160.810:FF:000001">
    <property type="entry name" value="50S ribosomal protein L3"/>
    <property type="match status" value="1"/>
</dbReference>
<dbReference type="FunFam" id="2.40.30.10:FF:000065">
    <property type="entry name" value="50S ribosomal protein L3, chloroplastic"/>
    <property type="match status" value="1"/>
</dbReference>
<dbReference type="Gene3D" id="3.30.160.810">
    <property type="match status" value="1"/>
</dbReference>
<dbReference type="Gene3D" id="2.40.30.10">
    <property type="entry name" value="Translation factors"/>
    <property type="match status" value="1"/>
</dbReference>
<dbReference type="HAMAP" id="MF_01325_B">
    <property type="entry name" value="Ribosomal_uL3_B"/>
    <property type="match status" value="1"/>
</dbReference>
<dbReference type="InterPro" id="IPR000597">
    <property type="entry name" value="Ribosomal_uL3"/>
</dbReference>
<dbReference type="InterPro" id="IPR019927">
    <property type="entry name" value="Ribosomal_uL3_bac/org-type"/>
</dbReference>
<dbReference type="InterPro" id="IPR019926">
    <property type="entry name" value="Ribosomal_uL3_CS"/>
</dbReference>
<dbReference type="InterPro" id="IPR009000">
    <property type="entry name" value="Transl_B-barrel_sf"/>
</dbReference>
<dbReference type="NCBIfam" id="TIGR03625">
    <property type="entry name" value="L3_bact"/>
    <property type="match status" value="1"/>
</dbReference>
<dbReference type="PANTHER" id="PTHR11229">
    <property type="entry name" value="50S RIBOSOMAL PROTEIN L3"/>
    <property type="match status" value="1"/>
</dbReference>
<dbReference type="PANTHER" id="PTHR11229:SF16">
    <property type="entry name" value="LARGE RIBOSOMAL SUBUNIT PROTEIN UL3C"/>
    <property type="match status" value="1"/>
</dbReference>
<dbReference type="Pfam" id="PF00297">
    <property type="entry name" value="Ribosomal_L3"/>
    <property type="match status" value="1"/>
</dbReference>
<dbReference type="SUPFAM" id="SSF50447">
    <property type="entry name" value="Translation proteins"/>
    <property type="match status" value="1"/>
</dbReference>
<dbReference type="PROSITE" id="PS00474">
    <property type="entry name" value="RIBOSOMAL_L3"/>
    <property type="match status" value="1"/>
</dbReference>
<comment type="function">
    <text evidence="1">One of the primary rRNA binding proteins, it binds directly near the 3'-end of the 23S rRNA, where it nucleates assembly of the 50S subunit.</text>
</comment>
<comment type="subunit">
    <text>Part of the 50S ribosomal subunit.</text>
</comment>
<comment type="subcellular location">
    <subcellularLocation>
        <location>Plastid</location>
        <location>Chloroplast</location>
    </subcellularLocation>
</comment>
<comment type="similarity">
    <text evidence="3">Belongs to the universal ribosomal protein uL3 family.</text>
</comment>
<reference key="1">
    <citation type="journal article" date="2007" name="Mol. Genet. Genomics">
        <title>Chloroplast genomes of the diatoms Phaeodactylum tricornutum and Thalassiosira pseudonana: comparison with other plastid genomes of the red lineage.</title>
        <authorList>
            <person name="Oudot-Le Secq M.-P."/>
            <person name="Grimwood J."/>
            <person name="Shapiro H."/>
            <person name="Armbrust E.V."/>
            <person name="Bowler C."/>
            <person name="Green B.R."/>
        </authorList>
    </citation>
    <scope>NUCLEOTIDE SEQUENCE [LARGE SCALE GENOMIC DNA]</scope>
    <source>
        <strain>CCAP 1055/1</strain>
    </source>
</reference>
<name>RK3_PHATC</name>
<organism>
    <name type="scientific">Phaeodactylum tricornutum (strain CCAP 1055/1)</name>
    <dbReference type="NCBI Taxonomy" id="556484"/>
    <lineage>
        <taxon>Eukaryota</taxon>
        <taxon>Sar</taxon>
        <taxon>Stramenopiles</taxon>
        <taxon>Ochrophyta</taxon>
        <taxon>Bacillariophyta</taxon>
        <taxon>Bacillariophyceae</taxon>
        <taxon>Bacillariophycidae</taxon>
        <taxon>Naviculales</taxon>
        <taxon>Phaeodactylaceae</taxon>
        <taxon>Phaeodactylum</taxon>
    </lineage>
</organism>
<gene>
    <name type="primary">rpl3</name>
</gene>
<proteinExistence type="inferred from homology"/>
<evidence type="ECO:0000250" key="1"/>
<evidence type="ECO:0000256" key="2">
    <source>
        <dbReference type="SAM" id="MobiDB-lite"/>
    </source>
</evidence>
<evidence type="ECO:0000305" key="3"/>
<keyword id="KW-0150">Chloroplast</keyword>
<keyword id="KW-0934">Plastid</keyword>
<keyword id="KW-1185">Reference proteome</keyword>
<keyword id="KW-0687">Ribonucleoprotein</keyword>
<keyword id="KW-0689">Ribosomal protein</keyword>
<keyword id="KW-0694">RNA-binding</keyword>
<keyword id="KW-0699">rRNA-binding</keyword>